<protein>
    <recommendedName>
        <fullName evidence="1">Large ribosomal subunit protein eL30</fullName>
    </recommendedName>
    <alternativeName>
        <fullName>50S ribosomal protein L30e</fullName>
    </alternativeName>
</protein>
<keyword id="KW-0687">Ribonucleoprotein</keyword>
<keyword id="KW-0689">Ribosomal protein</keyword>
<comment type="similarity">
    <text evidence="1">Belongs to the eukaryotic ribosomal protein eL30 family.</text>
</comment>
<sequence>MRRRYSMDINRAIRVAVDTGNVVLGTKQAIKNIKHGEGKLVIIAGNCAKDVKEDIFYYTKLSETPVYTHQVTSIELGAICGKPFPVSALLVLEPGNSAILNINNE</sequence>
<reference key="1">
    <citation type="journal article" date="1989" name="J. Mol. Evol.">
        <title>Organization and nucleotide sequence of a transcriptional unit of Methanococcus vannielii comprising genes for protein synthesis elongation factors and ribosomal proteins.</title>
        <authorList>
            <person name="Lechner K."/>
            <person name="Heller G."/>
            <person name="Boeck A."/>
        </authorList>
    </citation>
    <scope>NUCLEOTIDE SEQUENCE [GENOMIC DNA]</scope>
</reference>
<reference key="2">
    <citation type="submission" date="2007-06" db="EMBL/GenBank/DDBJ databases">
        <title>Complete sequence of Methanococcus vannielii SB.</title>
        <authorList>
            <consortium name="US DOE Joint Genome Institute"/>
            <person name="Copeland A."/>
            <person name="Lucas S."/>
            <person name="Lapidus A."/>
            <person name="Barry K."/>
            <person name="Glavina del Rio T."/>
            <person name="Dalin E."/>
            <person name="Tice H."/>
            <person name="Pitluck S."/>
            <person name="Chain P."/>
            <person name="Malfatti S."/>
            <person name="Shin M."/>
            <person name="Vergez L."/>
            <person name="Schmutz J."/>
            <person name="Larimer F."/>
            <person name="Land M."/>
            <person name="Hauser L."/>
            <person name="Kyrpides N."/>
            <person name="Anderson I."/>
            <person name="Sieprawska-Lupa M."/>
            <person name="Whitman W.B."/>
            <person name="Richardson P."/>
        </authorList>
    </citation>
    <scope>NUCLEOTIDE SEQUENCE [LARGE SCALE GENOMIC DNA]</scope>
    <source>
        <strain>ATCC 35089 / DSM 1224 / JCM 13029 / OCM 148 / SB</strain>
    </source>
</reference>
<organism>
    <name type="scientific">Methanococcus vannielii (strain ATCC 35089 / DSM 1224 / JCM 13029 / OCM 148 / SB)</name>
    <dbReference type="NCBI Taxonomy" id="406327"/>
    <lineage>
        <taxon>Archaea</taxon>
        <taxon>Methanobacteriati</taxon>
        <taxon>Methanobacteriota</taxon>
        <taxon>Methanomada group</taxon>
        <taxon>Methanococci</taxon>
        <taxon>Methanococcales</taxon>
        <taxon>Methanococcaceae</taxon>
        <taxon>Methanococcus</taxon>
    </lineage>
</organism>
<proteinExistence type="inferred from homology"/>
<dbReference type="EMBL" id="X15970">
    <property type="protein sequence ID" value="CAA34087.1"/>
    <property type="molecule type" value="Genomic_DNA"/>
</dbReference>
<dbReference type="EMBL" id="CP000742">
    <property type="protein sequence ID" value="ABR54581.1"/>
    <property type="molecule type" value="Genomic_DNA"/>
</dbReference>
<dbReference type="PIR" id="S06621">
    <property type="entry name" value="R6MXER"/>
</dbReference>
<dbReference type="RefSeq" id="WP_011972483.1">
    <property type="nucleotide sequence ID" value="NC_009634.1"/>
</dbReference>
<dbReference type="SMR" id="P14025"/>
<dbReference type="STRING" id="406327.Mevan_0675"/>
<dbReference type="GeneID" id="5325044"/>
<dbReference type="KEGG" id="mvn:Mevan_0675"/>
<dbReference type="eggNOG" id="arCOG01752">
    <property type="taxonomic scope" value="Archaea"/>
</dbReference>
<dbReference type="HOGENOM" id="CLU_130502_1_0_2"/>
<dbReference type="OrthoDB" id="10759at2157"/>
<dbReference type="Proteomes" id="UP000001107">
    <property type="component" value="Chromosome"/>
</dbReference>
<dbReference type="GO" id="GO:0022625">
    <property type="term" value="C:cytosolic large ribosomal subunit"/>
    <property type="evidence" value="ECO:0007669"/>
    <property type="project" value="InterPro"/>
</dbReference>
<dbReference type="GO" id="GO:0003723">
    <property type="term" value="F:RNA binding"/>
    <property type="evidence" value="ECO:0007669"/>
    <property type="project" value="InterPro"/>
</dbReference>
<dbReference type="GO" id="GO:0003735">
    <property type="term" value="F:structural constituent of ribosome"/>
    <property type="evidence" value="ECO:0007669"/>
    <property type="project" value="InterPro"/>
</dbReference>
<dbReference type="GO" id="GO:0006412">
    <property type="term" value="P:translation"/>
    <property type="evidence" value="ECO:0007669"/>
    <property type="project" value="UniProtKB-UniRule"/>
</dbReference>
<dbReference type="Gene3D" id="3.30.1330.30">
    <property type="match status" value="1"/>
</dbReference>
<dbReference type="HAMAP" id="MF_00481">
    <property type="entry name" value="Ribosomal_eL30"/>
    <property type="match status" value="1"/>
</dbReference>
<dbReference type="InterPro" id="IPR000231">
    <property type="entry name" value="Ribosomal_eL30"/>
</dbReference>
<dbReference type="InterPro" id="IPR039109">
    <property type="entry name" value="Ribosomal_eL30-like"/>
</dbReference>
<dbReference type="InterPro" id="IPR029064">
    <property type="entry name" value="Ribosomal_eL30-like_sf"/>
</dbReference>
<dbReference type="InterPro" id="IPR022991">
    <property type="entry name" value="Ribosomal_eL30_CS"/>
</dbReference>
<dbReference type="InterPro" id="IPR004038">
    <property type="entry name" value="Ribosomal_eL8/eL30/eS12/Gad45"/>
</dbReference>
<dbReference type="NCBIfam" id="NF002172">
    <property type="entry name" value="PRK01018.1"/>
    <property type="match status" value="1"/>
</dbReference>
<dbReference type="PANTHER" id="PTHR11449">
    <property type="entry name" value="RIBOSOMAL PROTEIN L30"/>
    <property type="match status" value="1"/>
</dbReference>
<dbReference type="Pfam" id="PF01248">
    <property type="entry name" value="Ribosomal_L7Ae"/>
    <property type="match status" value="1"/>
</dbReference>
<dbReference type="SUPFAM" id="SSF55315">
    <property type="entry name" value="L30e-like"/>
    <property type="match status" value="1"/>
</dbReference>
<dbReference type="PROSITE" id="PS00709">
    <property type="entry name" value="RIBOSOMAL_L30E_1"/>
    <property type="match status" value="1"/>
</dbReference>
<dbReference type="PROSITE" id="PS00993">
    <property type="entry name" value="RIBOSOMAL_L30E_2"/>
    <property type="match status" value="1"/>
</dbReference>
<gene>
    <name type="primary">rpl30e</name>
    <name type="ordered locus">Mevan_0675</name>
</gene>
<evidence type="ECO:0000305" key="1"/>
<feature type="chain" id="PRO_0000146151" description="Large ribosomal subunit protein eL30">
    <location>
        <begin position="1"/>
        <end position="105"/>
    </location>
</feature>
<name>RL30E_METVS</name>
<accession>P14025</accession>
<accession>A6UQ09</accession>